<proteinExistence type="inferred from homology"/>
<keyword id="KW-0067">ATP-binding</keyword>
<keyword id="KW-0963">Cytoplasm</keyword>
<keyword id="KW-0460">Magnesium</keyword>
<keyword id="KW-0479">Metal-binding</keyword>
<keyword id="KW-0547">Nucleotide-binding</keyword>
<keyword id="KW-0554">One-carbon metabolism</keyword>
<keyword id="KW-0630">Potassium</keyword>
<keyword id="KW-0808">Transferase</keyword>
<comment type="function">
    <text evidence="1">Catalyzes the formation of S-adenosylmethionine (AdoMet) from methionine and ATP. The overall synthetic reaction is composed of two sequential steps, AdoMet formation and the subsequent tripolyphosphate hydrolysis which occurs prior to release of AdoMet from the enzyme.</text>
</comment>
<comment type="catalytic activity">
    <reaction evidence="1">
        <text>L-methionine + ATP + H2O = S-adenosyl-L-methionine + phosphate + diphosphate</text>
        <dbReference type="Rhea" id="RHEA:21080"/>
        <dbReference type="ChEBI" id="CHEBI:15377"/>
        <dbReference type="ChEBI" id="CHEBI:30616"/>
        <dbReference type="ChEBI" id="CHEBI:33019"/>
        <dbReference type="ChEBI" id="CHEBI:43474"/>
        <dbReference type="ChEBI" id="CHEBI:57844"/>
        <dbReference type="ChEBI" id="CHEBI:59789"/>
        <dbReference type="EC" id="2.5.1.6"/>
    </reaction>
</comment>
<comment type="cofactor">
    <cofactor evidence="1">
        <name>Mg(2+)</name>
        <dbReference type="ChEBI" id="CHEBI:18420"/>
    </cofactor>
    <text evidence="1">Binds 2 divalent ions per subunit.</text>
</comment>
<comment type="cofactor">
    <cofactor evidence="1">
        <name>K(+)</name>
        <dbReference type="ChEBI" id="CHEBI:29103"/>
    </cofactor>
    <text evidence="1">Binds 1 potassium ion per subunit.</text>
</comment>
<comment type="pathway">
    <text evidence="1">Amino-acid biosynthesis; S-adenosyl-L-methionine biosynthesis; S-adenosyl-L-methionine from L-methionine: step 1/1.</text>
</comment>
<comment type="subunit">
    <text evidence="1">Homotetramer; dimer of dimers.</text>
</comment>
<comment type="subcellular location">
    <subcellularLocation>
        <location evidence="1">Cytoplasm</location>
    </subcellularLocation>
</comment>
<comment type="similarity">
    <text evidence="1">Belongs to the AdoMet synthase family.</text>
</comment>
<sequence>MSAKRRLFTSESVTEGHPDKICDQISDAILDAILEKDPNARVACETSVTTGLVLVSGEITTSTYVDIPRIVRDTVREIGYTRAKFGFDADTCAVLTAIDEQSPDIAMGVDQALEAREGQMTDEEIEAIGAGDQGLMFGFACNETEELMPLPISLAHRLSRRLAEVRKTDVLPYLRPDGKTQVTIEYDENGKPVRVDTIVISTQHHPEIEHDQIERDMKEHVIKPIVPAELLDENTKYFINPTGRFVIGGPQGDAGLTGRKIIVDTYGGYARHGGGAFSGKDPTKVDRSAAYAARYVAKNIVAAGLADKCEVQLAYAIGVARPVSISIDTFGTGKVSEDVLIEVVRNNFDLRPAGIIKMLDLRRPIYKQTAAYGHFGRTDVDLPWERTDKAAVLKEQALALAKNE</sequence>
<gene>
    <name evidence="1" type="primary">metK</name>
    <name type="ordered locus">GTNG_2750</name>
</gene>
<name>METK_GEOTN</name>
<evidence type="ECO:0000255" key="1">
    <source>
        <dbReference type="HAMAP-Rule" id="MF_00086"/>
    </source>
</evidence>
<reference key="1">
    <citation type="journal article" date="2007" name="Proc. Natl. Acad. Sci. U.S.A.">
        <title>Genome and proteome of long-chain alkane degrading Geobacillus thermodenitrificans NG80-2 isolated from a deep-subsurface oil reservoir.</title>
        <authorList>
            <person name="Feng L."/>
            <person name="Wang W."/>
            <person name="Cheng J."/>
            <person name="Ren Y."/>
            <person name="Zhao G."/>
            <person name="Gao C."/>
            <person name="Tang Y."/>
            <person name="Liu X."/>
            <person name="Han W."/>
            <person name="Peng X."/>
            <person name="Liu R."/>
            <person name="Wang L."/>
        </authorList>
    </citation>
    <scope>NUCLEOTIDE SEQUENCE [LARGE SCALE GENOMIC DNA]</scope>
    <source>
        <strain>NG80-2</strain>
    </source>
</reference>
<feature type="chain" id="PRO_0000302918" description="S-adenosylmethionine synthase">
    <location>
        <begin position="1"/>
        <end position="404"/>
    </location>
</feature>
<feature type="region of interest" description="Flexible loop" evidence="1">
    <location>
        <begin position="101"/>
        <end position="111"/>
    </location>
</feature>
<feature type="binding site" description="in other chain" evidence="1">
    <location>
        <position position="17"/>
    </location>
    <ligand>
        <name>ATP</name>
        <dbReference type="ChEBI" id="CHEBI:30616"/>
        <note>ligand shared between two neighboring subunits</note>
    </ligand>
</feature>
<feature type="binding site" evidence="1">
    <location>
        <position position="19"/>
    </location>
    <ligand>
        <name>Mg(2+)</name>
        <dbReference type="ChEBI" id="CHEBI:18420"/>
    </ligand>
</feature>
<feature type="binding site" evidence="1">
    <location>
        <position position="45"/>
    </location>
    <ligand>
        <name>K(+)</name>
        <dbReference type="ChEBI" id="CHEBI:29103"/>
    </ligand>
</feature>
<feature type="binding site" description="in other chain" evidence="1">
    <location>
        <position position="58"/>
    </location>
    <ligand>
        <name>L-methionine</name>
        <dbReference type="ChEBI" id="CHEBI:57844"/>
        <note>ligand shared between two neighboring subunits</note>
    </ligand>
</feature>
<feature type="binding site" description="in other chain" evidence="1">
    <location>
        <position position="101"/>
    </location>
    <ligand>
        <name>L-methionine</name>
        <dbReference type="ChEBI" id="CHEBI:57844"/>
        <note>ligand shared between two neighboring subunits</note>
    </ligand>
</feature>
<feature type="binding site" description="in other chain" evidence="1">
    <location>
        <begin position="177"/>
        <end position="179"/>
    </location>
    <ligand>
        <name>ATP</name>
        <dbReference type="ChEBI" id="CHEBI:30616"/>
        <note>ligand shared between two neighboring subunits</note>
    </ligand>
</feature>
<feature type="binding site" description="in other chain" evidence="1">
    <location>
        <begin position="244"/>
        <end position="245"/>
    </location>
    <ligand>
        <name>ATP</name>
        <dbReference type="ChEBI" id="CHEBI:30616"/>
        <note>ligand shared between two neighboring subunits</note>
    </ligand>
</feature>
<feature type="binding site" evidence="1">
    <location>
        <position position="253"/>
    </location>
    <ligand>
        <name>ATP</name>
        <dbReference type="ChEBI" id="CHEBI:30616"/>
        <note>ligand shared between two neighboring subunits</note>
    </ligand>
</feature>
<feature type="binding site" evidence="1">
    <location>
        <position position="253"/>
    </location>
    <ligand>
        <name>L-methionine</name>
        <dbReference type="ChEBI" id="CHEBI:57844"/>
        <note>ligand shared between two neighboring subunits</note>
    </ligand>
</feature>
<feature type="binding site" description="in other chain" evidence="1">
    <location>
        <begin position="259"/>
        <end position="260"/>
    </location>
    <ligand>
        <name>ATP</name>
        <dbReference type="ChEBI" id="CHEBI:30616"/>
        <note>ligand shared between two neighboring subunits</note>
    </ligand>
</feature>
<feature type="binding site" evidence="1">
    <location>
        <position position="276"/>
    </location>
    <ligand>
        <name>ATP</name>
        <dbReference type="ChEBI" id="CHEBI:30616"/>
        <note>ligand shared between two neighboring subunits</note>
    </ligand>
</feature>
<feature type="binding site" evidence="1">
    <location>
        <position position="280"/>
    </location>
    <ligand>
        <name>ATP</name>
        <dbReference type="ChEBI" id="CHEBI:30616"/>
        <note>ligand shared between two neighboring subunits</note>
    </ligand>
</feature>
<feature type="binding site" description="in other chain" evidence="1">
    <location>
        <position position="284"/>
    </location>
    <ligand>
        <name>L-methionine</name>
        <dbReference type="ChEBI" id="CHEBI:57844"/>
        <note>ligand shared between two neighboring subunits</note>
    </ligand>
</feature>
<accession>A4IRZ1</accession>
<organism>
    <name type="scientific">Geobacillus thermodenitrificans (strain NG80-2)</name>
    <dbReference type="NCBI Taxonomy" id="420246"/>
    <lineage>
        <taxon>Bacteria</taxon>
        <taxon>Bacillati</taxon>
        <taxon>Bacillota</taxon>
        <taxon>Bacilli</taxon>
        <taxon>Bacillales</taxon>
        <taxon>Anoxybacillaceae</taxon>
        <taxon>Geobacillus</taxon>
    </lineage>
</organism>
<dbReference type="EC" id="2.5.1.6" evidence="1"/>
<dbReference type="EMBL" id="CP000557">
    <property type="protein sequence ID" value="ABO68095.1"/>
    <property type="molecule type" value="Genomic_DNA"/>
</dbReference>
<dbReference type="RefSeq" id="WP_011888011.1">
    <property type="nucleotide sequence ID" value="NC_009328.1"/>
</dbReference>
<dbReference type="SMR" id="A4IRZ1"/>
<dbReference type="KEGG" id="gtn:GTNG_2750"/>
<dbReference type="eggNOG" id="COG0192">
    <property type="taxonomic scope" value="Bacteria"/>
</dbReference>
<dbReference type="HOGENOM" id="CLU_041802_1_1_9"/>
<dbReference type="UniPathway" id="UPA00315">
    <property type="reaction ID" value="UER00080"/>
</dbReference>
<dbReference type="Proteomes" id="UP000001578">
    <property type="component" value="Chromosome"/>
</dbReference>
<dbReference type="GO" id="GO:0005737">
    <property type="term" value="C:cytoplasm"/>
    <property type="evidence" value="ECO:0007669"/>
    <property type="project" value="UniProtKB-SubCell"/>
</dbReference>
<dbReference type="GO" id="GO:0005524">
    <property type="term" value="F:ATP binding"/>
    <property type="evidence" value="ECO:0007669"/>
    <property type="project" value="UniProtKB-UniRule"/>
</dbReference>
<dbReference type="GO" id="GO:0000287">
    <property type="term" value="F:magnesium ion binding"/>
    <property type="evidence" value="ECO:0007669"/>
    <property type="project" value="UniProtKB-UniRule"/>
</dbReference>
<dbReference type="GO" id="GO:0004478">
    <property type="term" value="F:methionine adenosyltransferase activity"/>
    <property type="evidence" value="ECO:0007669"/>
    <property type="project" value="UniProtKB-UniRule"/>
</dbReference>
<dbReference type="GO" id="GO:0006730">
    <property type="term" value="P:one-carbon metabolic process"/>
    <property type="evidence" value="ECO:0007669"/>
    <property type="project" value="UniProtKB-KW"/>
</dbReference>
<dbReference type="GO" id="GO:0006556">
    <property type="term" value="P:S-adenosylmethionine biosynthetic process"/>
    <property type="evidence" value="ECO:0007669"/>
    <property type="project" value="UniProtKB-UniRule"/>
</dbReference>
<dbReference type="CDD" id="cd18079">
    <property type="entry name" value="S-AdoMet_synt"/>
    <property type="match status" value="1"/>
</dbReference>
<dbReference type="FunFam" id="3.30.300.10:FF:000003">
    <property type="entry name" value="S-adenosylmethionine synthase"/>
    <property type="match status" value="1"/>
</dbReference>
<dbReference type="FunFam" id="3.30.300.10:FF:000004">
    <property type="entry name" value="S-adenosylmethionine synthase"/>
    <property type="match status" value="1"/>
</dbReference>
<dbReference type="Gene3D" id="3.30.300.10">
    <property type="match status" value="3"/>
</dbReference>
<dbReference type="HAMAP" id="MF_00086">
    <property type="entry name" value="S_AdoMet_synth1"/>
    <property type="match status" value="1"/>
</dbReference>
<dbReference type="InterPro" id="IPR022631">
    <property type="entry name" value="ADOMET_SYNTHASE_CS"/>
</dbReference>
<dbReference type="InterPro" id="IPR022630">
    <property type="entry name" value="S-AdoMet_synt_C"/>
</dbReference>
<dbReference type="InterPro" id="IPR022629">
    <property type="entry name" value="S-AdoMet_synt_central"/>
</dbReference>
<dbReference type="InterPro" id="IPR022628">
    <property type="entry name" value="S-AdoMet_synt_N"/>
</dbReference>
<dbReference type="InterPro" id="IPR002133">
    <property type="entry name" value="S-AdoMet_synthetase"/>
</dbReference>
<dbReference type="InterPro" id="IPR022636">
    <property type="entry name" value="S-AdoMet_synthetase_sfam"/>
</dbReference>
<dbReference type="NCBIfam" id="TIGR01034">
    <property type="entry name" value="metK"/>
    <property type="match status" value="1"/>
</dbReference>
<dbReference type="PANTHER" id="PTHR11964">
    <property type="entry name" value="S-ADENOSYLMETHIONINE SYNTHETASE"/>
    <property type="match status" value="1"/>
</dbReference>
<dbReference type="Pfam" id="PF02773">
    <property type="entry name" value="S-AdoMet_synt_C"/>
    <property type="match status" value="1"/>
</dbReference>
<dbReference type="Pfam" id="PF02772">
    <property type="entry name" value="S-AdoMet_synt_M"/>
    <property type="match status" value="1"/>
</dbReference>
<dbReference type="Pfam" id="PF00438">
    <property type="entry name" value="S-AdoMet_synt_N"/>
    <property type="match status" value="1"/>
</dbReference>
<dbReference type="PIRSF" id="PIRSF000497">
    <property type="entry name" value="MAT"/>
    <property type="match status" value="1"/>
</dbReference>
<dbReference type="SUPFAM" id="SSF55973">
    <property type="entry name" value="S-adenosylmethionine synthetase"/>
    <property type="match status" value="3"/>
</dbReference>
<dbReference type="PROSITE" id="PS00376">
    <property type="entry name" value="ADOMET_SYNTHASE_1"/>
    <property type="match status" value="1"/>
</dbReference>
<dbReference type="PROSITE" id="PS00377">
    <property type="entry name" value="ADOMET_SYNTHASE_2"/>
    <property type="match status" value="1"/>
</dbReference>
<protein>
    <recommendedName>
        <fullName evidence="1">S-adenosylmethionine synthase</fullName>
        <shortName evidence="1">AdoMet synthase</shortName>
        <ecNumber evidence="1">2.5.1.6</ecNumber>
    </recommendedName>
    <alternativeName>
        <fullName evidence="1">MAT</fullName>
    </alternativeName>
    <alternativeName>
        <fullName evidence="1">Methionine adenosyltransferase</fullName>
    </alternativeName>
</protein>